<evidence type="ECO:0000255" key="1">
    <source>
        <dbReference type="HAMAP-Rule" id="MF_00219"/>
    </source>
</evidence>
<name>PYRC_PSEP7</name>
<gene>
    <name evidence="1" type="primary">pyrC</name>
    <name type="ordered locus">PSPA7_1620</name>
</gene>
<comment type="function">
    <text evidence="1">Catalyzes the reversible cyclization of carbamoyl aspartate to dihydroorotate.</text>
</comment>
<comment type="catalytic activity">
    <reaction evidence="1">
        <text>(S)-dihydroorotate + H2O = N-carbamoyl-L-aspartate + H(+)</text>
        <dbReference type="Rhea" id="RHEA:24296"/>
        <dbReference type="ChEBI" id="CHEBI:15377"/>
        <dbReference type="ChEBI" id="CHEBI:15378"/>
        <dbReference type="ChEBI" id="CHEBI:30864"/>
        <dbReference type="ChEBI" id="CHEBI:32814"/>
        <dbReference type="EC" id="3.5.2.3"/>
    </reaction>
</comment>
<comment type="cofactor">
    <cofactor evidence="1">
        <name>Zn(2+)</name>
        <dbReference type="ChEBI" id="CHEBI:29105"/>
    </cofactor>
    <text evidence="1">Binds 2 Zn(2+) ions per subunit.</text>
</comment>
<comment type="pathway">
    <text evidence="1">Pyrimidine metabolism; UMP biosynthesis via de novo pathway; (S)-dihydroorotate from bicarbonate: step 3/3.</text>
</comment>
<comment type="subunit">
    <text evidence="1">Homodimer.</text>
</comment>
<comment type="similarity">
    <text evidence="1">Belongs to the metallo-dependent hydrolases superfamily. DHOase family. Class II DHOase subfamily.</text>
</comment>
<keyword id="KW-0378">Hydrolase</keyword>
<keyword id="KW-0479">Metal-binding</keyword>
<keyword id="KW-0665">Pyrimidine biosynthesis</keyword>
<keyword id="KW-0862">Zinc</keyword>
<sequence length="348" mass="38390">MSDRLTLLRPDDWHIHLRDGAALANTVGDAARTFGRAIVMPNLVPPVRNAAEADAYRQRILAARPAASRFEPLMVLYLTDRTSAEEIRTAKASGFVHAAKLYPAGATTNSDSGVTRIDNVFAALEAMAEVGMPLLVHGEVTRAEVDVFDREKQFIDEHLRRVVERFPTLKVVFEHITTGDAAQFVREAPANVGATITAHHLLYNRNHMLVGGIRPHFYCLPILKRNTHQEALLDAAVSGNPKFFLGTDSAPHARHAKEAACGCAGCYTAYAAIELYAEAFEQRNALDKLEGFASLHGPDFYGLPRNTDRITLVREQWQAPASLPFGDFDVVPLRAGETLRWKLLEAEA</sequence>
<accession>A6V1R9</accession>
<dbReference type="EC" id="3.5.2.3" evidence="1"/>
<dbReference type="EMBL" id="CP000744">
    <property type="protein sequence ID" value="ABR86166.1"/>
    <property type="molecule type" value="Genomic_DNA"/>
</dbReference>
<dbReference type="RefSeq" id="WP_012074780.1">
    <property type="nucleotide sequence ID" value="NC_009656.1"/>
</dbReference>
<dbReference type="SMR" id="A6V1R9"/>
<dbReference type="MEROPS" id="M38.A02"/>
<dbReference type="KEGG" id="pap:PSPA7_1620"/>
<dbReference type="HOGENOM" id="CLU_041558_1_0_6"/>
<dbReference type="UniPathway" id="UPA00070">
    <property type="reaction ID" value="UER00117"/>
</dbReference>
<dbReference type="Proteomes" id="UP000001582">
    <property type="component" value="Chromosome"/>
</dbReference>
<dbReference type="GO" id="GO:0005829">
    <property type="term" value="C:cytosol"/>
    <property type="evidence" value="ECO:0007669"/>
    <property type="project" value="TreeGrafter"/>
</dbReference>
<dbReference type="GO" id="GO:0004151">
    <property type="term" value="F:dihydroorotase activity"/>
    <property type="evidence" value="ECO:0007669"/>
    <property type="project" value="UniProtKB-UniRule"/>
</dbReference>
<dbReference type="GO" id="GO:0008270">
    <property type="term" value="F:zinc ion binding"/>
    <property type="evidence" value="ECO:0007669"/>
    <property type="project" value="UniProtKB-UniRule"/>
</dbReference>
<dbReference type="GO" id="GO:0006207">
    <property type="term" value="P:'de novo' pyrimidine nucleobase biosynthetic process"/>
    <property type="evidence" value="ECO:0007669"/>
    <property type="project" value="TreeGrafter"/>
</dbReference>
<dbReference type="GO" id="GO:0044205">
    <property type="term" value="P:'de novo' UMP biosynthetic process"/>
    <property type="evidence" value="ECO:0007669"/>
    <property type="project" value="UniProtKB-UniRule"/>
</dbReference>
<dbReference type="CDD" id="cd01294">
    <property type="entry name" value="DHOase"/>
    <property type="match status" value="1"/>
</dbReference>
<dbReference type="FunFam" id="3.20.20.140:FF:000006">
    <property type="entry name" value="Dihydroorotase"/>
    <property type="match status" value="1"/>
</dbReference>
<dbReference type="Gene3D" id="3.20.20.140">
    <property type="entry name" value="Metal-dependent hydrolases"/>
    <property type="match status" value="1"/>
</dbReference>
<dbReference type="HAMAP" id="MF_00219">
    <property type="entry name" value="PyrC_classII"/>
    <property type="match status" value="1"/>
</dbReference>
<dbReference type="InterPro" id="IPR006680">
    <property type="entry name" value="Amidohydro-rel"/>
</dbReference>
<dbReference type="InterPro" id="IPR004721">
    <property type="entry name" value="DHOdimr"/>
</dbReference>
<dbReference type="InterPro" id="IPR002195">
    <property type="entry name" value="Dihydroorotase_CS"/>
</dbReference>
<dbReference type="InterPro" id="IPR032466">
    <property type="entry name" value="Metal_Hydrolase"/>
</dbReference>
<dbReference type="NCBIfam" id="TIGR00856">
    <property type="entry name" value="pyrC_dimer"/>
    <property type="match status" value="1"/>
</dbReference>
<dbReference type="PANTHER" id="PTHR43137">
    <property type="entry name" value="DIHYDROOROTASE"/>
    <property type="match status" value="1"/>
</dbReference>
<dbReference type="PANTHER" id="PTHR43137:SF1">
    <property type="entry name" value="DIHYDROOROTASE"/>
    <property type="match status" value="1"/>
</dbReference>
<dbReference type="Pfam" id="PF01979">
    <property type="entry name" value="Amidohydro_1"/>
    <property type="match status" value="1"/>
</dbReference>
<dbReference type="PIRSF" id="PIRSF001237">
    <property type="entry name" value="DHOdimr"/>
    <property type="match status" value="1"/>
</dbReference>
<dbReference type="SUPFAM" id="SSF51556">
    <property type="entry name" value="Metallo-dependent hydrolases"/>
    <property type="match status" value="1"/>
</dbReference>
<dbReference type="PROSITE" id="PS00482">
    <property type="entry name" value="DIHYDROOROTASE_1"/>
    <property type="match status" value="1"/>
</dbReference>
<dbReference type="PROSITE" id="PS00483">
    <property type="entry name" value="DIHYDROOROTASE_2"/>
    <property type="match status" value="1"/>
</dbReference>
<protein>
    <recommendedName>
        <fullName evidence="1">Dihydroorotase</fullName>
        <shortName evidence="1">DHOase</shortName>
        <ecNumber evidence="1">3.5.2.3</ecNumber>
    </recommendedName>
</protein>
<organism>
    <name type="scientific">Pseudomonas paraeruginosa (strain DSM 24068 / PA7)</name>
    <name type="common">Pseudomonas aeruginosa (strain PA7)</name>
    <dbReference type="NCBI Taxonomy" id="381754"/>
    <lineage>
        <taxon>Bacteria</taxon>
        <taxon>Pseudomonadati</taxon>
        <taxon>Pseudomonadota</taxon>
        <taxon>Gammaproteobacteria</taxon>
        <taxon>Pseudomonadales</taxon>
        <taxon>Pseudomonadaceae</taxon>
        <taxon>Pseudomonas</taxon>
        <taxon>Pseudomonas paraeruginosa</taxon>
    </lineage>
</organism>
<reference key="1">
    <citation type="submission" date="2007-06" db="EMBL/GenBank/DDBJ databases">
        <authorList>
            <person name="Dodson R.J."/>
            <person name="Harkins D."/>
            <person name="Paulsen I.T."/>
        </authorList>
    </citation>
    <scope>NUCLEOTIDE SEQUENCE [LARGE SCALE GENOMIC DNA]</scope>
    <source>
        <strain>DSM 24068 / PA7</strain>
    </source>
</reference>
<feature type="chain" id="PRO_1000024032" description="Dihydroorotase">
    <location>
        <begin position="1"/>
        <end position="348"/>
    </location>
</feature>
<feature type="active site" evidence="1">
    <location>
        <position position="248"/>
    </location>
</feature>
<feature type="binding site" evidence="1">
    <location>
        <position position="14"/>
    </location>
    <ligand>
        <name>Zn(2+)</name>
        <dbReference type="ChEBI" id="CHEBI:29105"/>
        <label>1</label>
    </ligand>
</feature>
<feature type="binding site" evidence="1">
    <location>
        <begin position="16"/>
        <end position="18"/>
    </location>
    <ligand>
        <name>substrate</name>
    </ligand>
</feature>
<feature type="binding site" evidence="1">
    <location>
        <position position="16"/>
    </location>
    <ligand>
        <name>Zn(2+)</name>
        <dbReference type="ChEBI" id="CHEBI:29105"/>
        <label>1</label>
    </ligand>
</feature>
<feature type="binding site" evidence="1">
    <location>
        <position position="42"/>
    </location>
    <ligand>
        <name>substrate</name>
    </ligand>
</feature>
<feature type="binding site" description="via carbamate group" evidence="1">
    <location>
        <position position="100"/>
    </location>
    <ligand>
        <name>Zn(2+)</name>
        <dbReference type="ChEBI" id="CHEBI:29105"/>
        <label>1</label>
    </ligand>
</feature>
<feature type="binding site" description="via carbamate group" evidence="1">
    <location>
        <position position="100"/>
    </location>
    <ligand>
        <name>Zn(2+)</name>
        <dbReference type="ChEBI" id="CHEBI:29105"/>
        <label>2</label>
    </ligand>
</feature>
<feature type="binding site" evidence="1">
    <location>
        <position position="137"/>
    </location>
    <ligand>
        <name>substrate</name>
    </ligand>
</feature>
<feature type="binding site" evidence="1">
    <location>
        <position position="137"/>
    </location>
    <ligand>
        <name>Zn(2+)</name>
        <dbReference type="ChEBI" id="CHEBI:29105"/>
        <label>2</label>
    </ligand>
</feature>
<feature type="binding site" evidence="1">
    <location>
        <position position="175"/>
    </location>
    <ligand>
        <name>Zn(2+)</name>
        <dbReference type="ChEBI" id="CHEBI:29105"/>
        <label>2</label>
    </ligand>
</feature>
<feature type="binding site" evidence="1">
    <location>
        <position position="220"/>
    </location>
    <ligand>
        <name>substrate</name>
    </ligand>
</feature>
<feature type="binding site" evidence="1">
    <location>
        <position position="248"/>
    </location>
    <ligand>
        <name>Zn(2+)</name>
        <dbReference type="ChEBI" id="CHEBI:29105"/>
        <label>1</label>
    </ligand>
</feature>
<feature type="binding site" evidence="1">
    <location>
        <position position="252"/>
    </location>
    <ligand>
        <name>substrate</name>
    </ligand>
</feature>
<feature type="binding site" evidence="1">
    <location>
        <position position="264"/>
    </location>
    <ligand>
        <name>substrate</name>
    </ligand>
</feature>
<feature type="modified residue" description="N6-carboxylysine" evidence="1">
    <location>
        <position position="100"/>
    </location>
</feature>
<proteinExistence type="inferred from homology"/>